<keyword id="KW-0238">DNA-binding</keyword>
<keyword id="KW-0539">Nucleus</keyword>
<keyword id="KW-0597">Phosphoprotein</keyword>
<keyword id="KW-1185">Reference proteome</keyword>
<keyword id="KW-0804">Transcription</keyword>
<keyword id="KW-0805">Transcription regulation</keyword>
<name>RLM1_YEAST</name>
<feature type="chain" id="PRO_0000199440" description="Transcription factor RLM1">
    <location>
        <begin position="1"/>
        <end position="676"/>
    </location>
</feature>
<feature type="domain" description="MADS-box" evidence="2">
    <location>
        <begin position="3"/>
        <end position="57"/>
    </location>
</feature>
<feature type="DNA-binding region" description="Mef2-type" evidence="1">
    <location>
        <begin position="58"/>
        <end position="87"/>
    </location>
</feature>
<feature type="region of interest" description="Disordered" evidence="3">
    <location>
        <begin position="103"/>
        <end position="156"/>
    </location>
</feature>
<feature type="region of interest" description="Disordered" evidence="3">
    <location>
        <begin position="173"/>
        <end position="192"/>
    </location>
</feature>
<feature type="region of interest" description="Disordered" evidence="3">
    <location>
        <begin position="202"/>
        <end position="318"/>
    </location>
</feature>
<feature type="region of interest" description="Disordered" evidence="3">
    <location>
        <begin position="330"/>
        <end position="424"/>
    </location>
</feature>
<feature type="region of interest" description="Disordered" evidence="3">
    <location>
        <begin position="472"/>
        <end position="514"/>
    </location>
</feature>
<feature type="region of interest" description="Disordered" evidence="3">
    <location>
        <begin position="532"/>
        <end position="631"/>
    </location>
</feature>
<feature type="compositionally biased region" description="Polar residues" evidence="3">
    <location>
        <begin position="103"/>
        <end position="120"/>
    </location>
</feature>
<feature type="compositionally biased region" description="Acidic residues" evidence="3">
    <location>
        <begin position="121"/>
        <end position="134"/>
    </location>
</feature>
<feature type="compositionally biased region" description="Basic and acidic residues" evidence="3">
    <location>
        <begin position="173"/>
        <end position="183"/>
    </location>
</feature>
<feature type="compositionally biased region" description="Polar residues" evidence="3">
    <location>
        <begin position="260"/>
        <end position="276"/>
    </location>
</feature>
<feature type="compositionally biased region" description="Low complexity" evidence="3">
    <location>
        <begin position="284"/>
        <end position="295"/>
    </location>
</feature>
<feature type="compositionally biased region" description="Polar residues" evidence="3">
    <location>
        <begin position="296"/>
        <end position="312"/>
    </location>
</feature>
<feature type="compositionally biased region" description="Low complexity" evidence="3">
    <location>
        <begin position="334"/>
        <end position="359"/>
    </location>
</feature>
<feature type="compositionally biased region" description="Low complexity" evidence="3">
    <location>
        <begin position="368"/>
        <end position="381"/>
    </location>
</feature>
<feature type="compositionally biased region" description="Low complexity" evidence="3">
    <location>
        <begin position="399"/>
        <end position="417"/>
    </location>
</feature>
<feature type="compositionally biased region" description="Polar residues" evidence="3">
    <location>
        <begin position="472"/>
        <end position="506"/>
    </location>
</feature>
<feature type="compositionally biased region" description="Low complexity" evidence="3">
    <location>
        <begin position="539"/>
        <end position="604"/>
    </location>
</feature>
<feature type="compositionally biased region" description="Polar residues" evidence="3">
    <location>
        <begin position="621"/>
        <end position="631"/>
    </location>
</feature>
<feature type="modified residue" description="Phosphoserine" evidence="9">
    <location>
        <position position="120"/>
    </location>
</feature>
<feature type="modified residue" description="Phosphoserine" evidence="7">
    <location>
        <position position="164"/>
    </location>
</feature>
<feature type="modified residue" description="Phosphoserine" evidence="7 8 9">
    <location>
        <position position="374"/>
    </location>
</feature>
<feature type="modified residue" description="Phosphoserine" evidence="7 9">
    <location>
        <position position="377"/>
    </location>
</feature>
<evidence type="ECO:0000255" key="1"/>
<evidence type="ECO:0000255" key="2">
    <source>
        <dbReference type="PROSITE-ProRule" id="PRU00251"/>
    </source>
</evidence>
<evidence type="ECO:0000256" key="3">
    <source>
        <dbReference type="SAM" id="MobiDB-lite"/>
    </source>
</evidence>
<evidence type="ECO:0000269" key="4">
    <source>
    </source>
</evidence>
<evidence type="ECO:0000269" key="5">
    <source>
    </source>
</evidence>
<evidence type="ECO:0000305" key="6"/>
<evidence type="ECO:0007744" key="7">
    <source>
    </source>
</evidence>
<evidence type="ECO:0007744" key="8">
    <source>
    </source>
</evidence>
<evidence type="ECO:0007744" key="9">
    <source>
    </source>
</evidence>
<dbReference type="EMBL" id="U43281">
    <property type="protein sequence ID" value="AAB68210.1"/>
    <property type="molecule type" value="Genomic_DNA"/>
</dbReference>
<dbReference type="EMBL" id="D63340">
    <property type="protein sequence ID" value="BAA09658.1"/>
    <property type="molecule type" value="Genomic_DNA"/>
</dbReference>
<dbReference type="EMBL" id="BK006949">
    <property type="protein sequence ID" value="DAA11344.1"/>
    <property type="molecule type" value="Genomic_DNA"/>
</dbReference>
<dbReference type="PIR" id="S61977">
    <property type="entry name" value="S61977"/>
</dbReference>
<dbReference type="RefSeq" id="NP_015236.1">
    <property type="nucleotide sequence ID" value="NM_001183903.1"/>
</dbReference>
<dbReference type="SMR" id="Q12224"/>
<dbReference type="BioGRID" id="36092">
    <property type="interactions" value="135"/>
</dbReference>
<dbReference type="DIP" id="DIP-2480N"/>
<dbReference type="ELM" id="Q12224"/>
<dbReference type="FunCoup" id="Q12224">
    <property type="interactions" value="1018"/>
</dbReference>
<dbReference type="IntAct" id="Q12224">
    <property type="interactions" value="18"/>
</dbReference>
<dbReference type="MINT" id="Q12224"/>
<dbReference type="STRING" id="4932.YPL089C"/>
<dbReference type="iPTMnet" id="Q12224"/>
<dbReference type="PaxDb" id="4932-YPL089C"/>
<dbReference type="PeptideAtlas" id="Q12224"/>
<dbReference type="EnsemblFungi" id="YPL089C_mRNA">
    <property type="protein sequence ID" value="YPL089C"/>
    <property type="gene ID" value="YPL089C"/>
</dbReference>
<dbReference type="GeneID" id="856016"/>
<dbReference type="KEGG" id="sce:YPL089C"/>
<dbReference type="AGR" id="SGD:S000006010"/>
<dbReference type="SGD" id="S000006010">
    <property type="gene designation" value="RLM1"/>
</dbReference>
<dbReference type="VEuPathDB" id="FungiDB:YPL089C"/>
<dbReference type="eggNOG" id="KOG0014">
    <property type="taxonomic scope" value="Eukaryota"/>
</dbReference>
<dbReference type="GeneTree" id="ENSGT00940000169350"/>
<dbReference type="HOGENOM" id="CLU_022725_0_0_1"/>
<dbReference type="InParanoid" id="Q12224"/>
<dbReference type="OMA" id="VQRQFHN"/>
<dbReference type="OrthoDB" id="1898716at2759"/>
<dbReference type="BioCyc" id="YEAST:G3O-33994-MONOMER"/>
<dbReference type="Reactome" id="R-SCE-525793">
    <property type="pathway name" value="Myogenesis"/>
</dbReference>
<dbReference type="BioGRID-ORCS" id="856016">
    <property type="hits" value="0 hits in 13 CRISPR screens"/>
</dbReference>
<dbReference type="PRO" id="PR:Q12224"/>
<dbReference type="Proteomes" id="UP000002311">
    <property type="component" value="Chromosome XVI"/>
</dbReference>
<dbReference type="RNAct" id="Q12224">
    <property type="molecule type" value="protein"/>
</dbReference>
<dbReference type="GO" id="GO:0005634">
    <property type="term" value="C:nucleus"/>
    <property type="evidence" value="ECO:0000314"/>
    <property type="project" value="SGD"/>
</dbReference>
<dbReference type="GO" id="GO:0008301">
    <property type="term" value="F:DNA binding, bending"/>
    <property type="evidence" value="ECO:0000314"/>
    <property type="project" value="SGD"/>
</dbReference>
<dbReference type="GO" id="GO:0000981">
    <property type="term" value="F:DNA-binding transcription factor activity, RNA polymerase II-specific"/>
    <property type="evidence" value="ECO:0000314"/>
    <property type="project" value="SGD"/>
</dbReference>
<dbReference type="GO" id="GO:0051019">
    <property type="term" value="F:mitogen-activated protein kinase binding"/>
    <property type="evidence" value="ECO:0000353"/>
    <property type="project" value="UniProtKB"/>
</dbReference>
<dbReference type="GO" id="GO:0046983">
    <property type="term" value="F:protein dimerization activity"/>
    <property type="evidence" value="ECO:0007669"/>
    <property type="project" value="InterPro"/>
</dbReference>
<dbReference type="GO" id="GO:0000978">
    <property type="term" value="F:RNA polymerase II cis-regulatory region sequence-specific DNA binding"/>
    <property type="evidence" value="ECO:0000318"/>
    <property type="project" value="GO_Central"/>
</dbReference>
<dbReference type="GO" id="GO:0043565">
    <property type="term" value="F:sequence-specific DNA binding"/>
    <property type="evidence" value="ECO:0000314"/>
    <property type="project" value="SGD"/>
</dbReference>
<dbReference type="GO" id="GO:0034605">
    <property type="term" value="P:cellular response to heat"/>
    <property type="evidence" value="ECO:0000315"/>
    <property type="project" value="SGD"/>
</dbReference>
<dbReference type="GO" id="GO:0033554">
    <property type="term" value="P:cellular response to stress"/>
    <property type="evidence" value="ECO:0000314"/>
    <property type="project" value="SGD"/>
</dbReference>
<dbReference type="GO" id="GO:0045944">
    <property type="term" value="P:positive regulation of transcription by RNA polymerase II"/>
    <property type="evidence" value="ECO:0000314"/>
    <property type="project" value="SGD"/>
</dbReference>
<dbReference type="GO" id="GO:0060256">
    <property type="term" value="P:regulation of flocculation"/>
    <property type="evidence" value="ECO:0000315"/>
    <property type="project" value="SGD"/>
</dbReference>
<dbReference type="GO" id="GO:1903450">
    <property type="term" value="P:regulation of G1 to G0 transition"/>
    <property type="evidence" value="ECO:0000315"/>
    <property type="project" value="SGD"/>
</dbReference>
<dbReference type="GO" id="GO:0007165">
    <property type="term" value="P:signal transduction"/>
    <property type="evidence" value="ECO:0000315"/>
    <property type="project" value="SGD"/>
</dbReference>
<dbReference type="CDD" id="cd00265">
    <property type="entry name" value="MADS_MEF2_like"/>
    <property type="match status" value="1"/>
</dbReference>
<dbReference type="FunFam" id="3.40.1810.10:FF:000013">
    <property type="entry name" value="Transcription factor, MADS-box"/>
    <property type="match status" value="1"/>
</dbReference>
<dbReference type="Gene3D" id="3.40.1810.10">
    <property type="entry name" value="Transcription factor, MADS-box"/>
    <property type="match status" value="1"/>
</dbReference>
<dbReference type="InterPro" id="IPR033896">
    <property type="entry name" value="MEF2-like_N"/>
</dbReference>
<dbReference type="InterPro" id="IPR002100">
    <property type="entry name" value="TF_MADSbox"/>
</dbReference>
<dbReference type="InterPro" id="IPR036879">
    <property type="entry name" value="TF_MADSbox_sf"/>
</dbReference>
<dbReference type="PANTHER" id="PTHR11945">
    <property type="entry name" value="MADS BOX PROTEIN"/>
    <property type="match status" value="1"/>
</dbReference>
<dbReference type="PANTHER" id="PTHR11945:SF534">
    <property type="entry name" value="MYOCYTE-SPECIFIC ENHANCER FACTOR 2"/>
    <property type="match status" value="1"/>
</dbReference>
<dbReference type="Pfam" id="PF00319">
    <property type="entry name" value="SRF-TF"/>
    <property type="match status" value="1"/>
</dbReference>
<dbReference type="PRINTS" id="PR00404">
    <property type="entry name" value="MADSDOMAIN"/>
</dbReference>
<dbReference type="SMART" id="SM00432">
    <property type="entry name" value="MADS"/>
    <property type="match status" value="1"/>
</dbReference>
<dbReference type="SUPFAM" id="SSF55455">
    <property type="entry name" value="SRF-like"/>
    <property type="match status" value="1"/>
</dbReference>
<dbReference type="PROSITE" id="PS00350">
    <property type="entry name" value="MADS_BOX_1"/>
    <property type="match status" value="1"/>
</dbReference>
<dbReference type="PROSITE" id="PS50066">
    <property type="entry name" value="MADS_BOX_2"/>
    <property type="match status" value="1"/>
</dbReference>
<organism>
    <name type="scientific">Saccharomyces cerevisiae (strain ATCC 204508 / S288c)</name>
    <name type="common">Baker's yeast</name>
    <dbReference type="NCBI Taxonomy" id="559292"/>
    <lineage>
        <taxon>Eukaryota</taxon>
        <taxon>Fungi</taxon>
        <taxon>Dikarya</taxon>
        <taxon>Ascomycota</taxon>
        <taxon>Saccharomycotina</taxon>
        <taxon>Saccharomycetes</taxon>
        <taxon>Saccharomycetales</taxon>
        <taxon>Saccharomycetaceae</taxon>
        <taxon>Saccharomyces</taxon>
    </lineage>
</organism>
<sequence length="676" mass="73484">MGRRKIEIQRISDDRNRAVTFIKRKAGLFKKAHELSVLCQVDIAVIILGSNNTFYEFSSVDTNDLIYHYQNDKNLLHEVKDPSDYGDFHKSASVNINQDLLRSSMSNKPSKSNVKGMNQSENDDDENNDEDDDDHGNFERNSNMHSNKKASDKNIPSAHMKLLSPTALISKMDGSEQNKRHPENALPPLQHLKRLKPDPLQISRTPQQQQQQNISRPYHSSMYNLNQPSSSSSSPSTMDFPKLPSFQNSSFNGRPPPISISPNKFSKPFTNASSRTPKQEHKINNSGSNNNDNSNYTQSPSNSLEDSIQQTVKARRKLSARPVLRVRIPNNNFSSNSAIPSEPSSASSTSANGNSMGSSQIMKENKTSRSSKISPLSASASGPLTLQKGNNGRMVIKLPNANAPNGSNNGNGSNNNNHPYPFGSGSSPLFSATQPYIATPLQPSNIPGGPFQQNTSFLAQRQTQQYQQMSFKKQSQTVPLTTTLTGRPPSTFSGPETSNGPPTGSLPSKFVHDLMSNSPNVSSISMFPDWSMGPNSAKPGNTNNPGTFPPVQTAVNNGNSSNISSTNNTNNNNNNNNNNSSNNNSNNGNDNNSNNSNNSYYSNNEDAPVNGAAISEHTTDGDSNNQSNSSTYDAAATAYNGNTGLTPYINTAQTPLGTKFFNFSTDISGEKNSSKI</sequence>
<accession>Q12224</accession>
<accession>D6W3S8</accession>
<comment type="function">
    <text evidence="5">May function as a transcription factor downstream of MPK1 that is subject to activation by the MPK1 mitogen-activated protein kinase pathway. Binds to the DNA sequence 5'-CTA[TA](4)TAG-3'. At least some RML1 target genes are involved in cell wall biosynthesis.</text>
</comment>
<comment type="subunit">
    <text evidence="5">Can heterodimerize with SPM1. Interacts with KDX1 and SLT2.</text>
</comment>
<comment type="subcellular location">
    <subcellularLocation>
        <location evidence="2">Nucleus</location>
    </subcellularLocation>
</comment>
<comment type="PTM">
    <text evidence="5">Phosphorylated by SLT2.</text>
</comment>
<comment type="miscellaneous">
    <text evidence="4">Present with 736 molecules/cell in log phase SD medium.</text>
</comment>
<comment type="similarity">
    <text evidence="6">Belongs to the MEF2 family.</text>
</comment>
<protein>
    <recommendedName>
        <fullName>Transcription factor RLM1</fullName>
    </recommendedName>
</protein>
<reference key="1">
    <citation type="journal article" date="1995" name="Mol. Cell. Biol.">
        <title>Yeast RLM1 encodes a serum response factor-like protein that may function downstream of the Mpk1 (Slt2) mitogen-activated protein kinase pathway.</title>
        <authorList>
            <person name="Watanabe Y."/>
            <person name="Irie K."/>
            <person name="Matsumoto K."/>
        </authorList>
    </citation>
    <scope>NUCLEOTIDE SEQUENCE [GENOMIC DNA]</scope>
    <source>
        <strain>ATCC 204508 / S288c</strain>
    </source>
</reference>
<reference key="2">
    <citation type="journal article" date="1997" name="Nature">
        <title>The nucleotide sequence of Saccharomyces cerevisiae chromosome XVI.</title>
        <authorList>
            <person name="Bussey H."/>
            <person name="Storms R.K."/>
            <person name="Ahmed A."/>
            <person name="Albermann K."/>
            <person name="Allen E."/>
            <person name="Ansorge W."/>
            <person name="Araujo R."/>
            <person name="Aparicio A."/>
            <person name="Barrell B.G."/>
            <person name="Badcock K."/>
            <person name="Benes V."/>
            <person name="Botstein D."/>
            <person name="Bowman S."/>
            <person name="Brueckner M."/>
            <person name="Carpenter J."/>
            <person name="Cherry J.M."/>
            <person name="Chung E."/>
            <person name="Churcher C.M."/>
            <person name="Coster F."/>
            <person name="Davis K."/>
            <person name="Davis R.W."/>
            <person name="Dietrich F.S."/>
            <person name="Delius H."/>
            <person name="DiPaolo T."/>
            <person name="Dubois E."/>
            <person name="Duesterhoeft A."/>
            <person name="Duncan M."/>
            <person name="Floeth M."/>
            <person name="Fortin N."/>
            <person name="Friesen J.D."/>
            <person name="Fritz C."/>
            <person name="Goffeau A."/>
            <person name="Hall J."/>
            <person name="Hebling U."/>
            <person name="Heumann K."/>
            <person name="Hilbert H."/>
            <person name="Hillier L.W."/>
            <person name="Hunicke-Smith S."/>
            <person name="Hyman R.W."/>
            <person name="Johnston M."/>
            <person name="Kalman S."/>
            <person name="Kleine K."/>
            <person name="Komp C."/>
            <person name="Kurdi O."/>
            <person name="Lashkari D."/>
            <person name="Lew H."/>
            <person name="Lin A."/>
            <person name="Lin D."/>
            <person name="Louis E.J."/>
            <person name="Marathe R."/>
            <person name="Messenguy F."/>
            <person name="Mewes H.-W."/>
            <person name="Mirtipati S."/>
            <person name="Moestl D."/>
            <person name="Mueller-Auer S."/>
            <person name="Namath A."/>
            <person name="Nentwich U."/>
            <person name="Oefner P."/>
            <person name="Pearson D."/>
            <person name="Petel F.X."/>
            <person name="Pohl T.M."/>
            <person name="Purnelle B."/>
            <person name="Rajandream M.A."/>
            <person name="Rechmann S."/>
            <person name="Rieger M."/>
            <person name="Riles L."/>
            <person name="Roberts D."/>
            <person name="Schaefer M."/>
            <person name="Scharfe M."/>
            <person name="Scherens B."/>
            <person name="Schramm S."/>
            <person name="Schroeder M."/>
            <person name="Sdicu A.-M."/>
            <person name="Tettelin H."/>
            <person name="Urrestarazu L.A."/>
            <person name="Ushinsky S."/>
            <person name="Vierendeels F."/>
            <person name="Vissers S."/>
            <person name="Voss H."/>
            <person name="Walsh S.V."/>
            <person name="Wambutt R."/>
            <person name="Wang Y."/>
            <person name="Wedler E."/>
            <person name="Wedler H."/>
            <person name="Winnett E."/>
            <person name="Zhong W.-W."/>
            <person name="Zollner A."/>
            <person name="Vo D.H."/>
            <person name="Hani J."/>
        </authorList>
    </citation>
    <scope>NUCLEOTIDE SEQUENCE [LARGE SCALE GENOMIC DNA]</scope>
    <source>
        <strain>ATCC 204508 / S288c</strain>
    </source>
</reference>
<reference key="3">
    <citation type="journal article" date="2014" name="G3 (Bethesda)">
        <title>The reference genome sequence of Saccharomyces cerevisiae: Then and now.</title>
        <authorList>
            <person name="Engel S.R."/>
            <person name="Dietrich F.S."/>
            <person name="Fisk D.G."/>
            <person name="Binkley G."/>
            <person name="Balakrishnan R."/>
            <person name="Costanzo M.C."/>
            <person name="Dwight S.S."/>
            <person name="Hitz B.C."/>
            <person name="Karra K."/>
            <person name="Nash R.S."/>
            <person name="Weng S."/>
            <person name="Wong E.D."/>
            <person name="Lloyd P."/>
            <person name="Skrzypek M.S."/>
            <person name="Miyasato S.R."/>
            <person name="Simison M."/>
            <person name="Cherry J.M."/>
        </authorList>
    </citation>
    <scope>GENOME REANNOTATION</scope>
    <source>
        <strain>ATCC 204508 / S288c</strain>
    </source>
</reference>
<reference key="4">
    <citation type="journal article" date="1997" name="Mol. Cell. Biol.">
        <title>The Saccharomyces cerevisiae MADS-box transcription factor Rlm1 is a target for the Mpk1 mitogen-activated protein kinase pathway.</title>
        <authorList>
            <person name="Dodou E."/>
            <person name="Treisman R."/>
        </authorList>
    </citation>
    <scope>CHARACTERIZATION</scope>
</reference>
<reference key="5">
    <citation type="journal article" date="1997" name="Mol. Cell. Biol.">
        <title>Characterization of a serum response factor-like protein in Saccharomyces cerevisiae, Rlm1, which has transcriptional activity regulated by the Mpk1 (Slt2) mitogen-activated protein kinase pathway.</title>
        <authorList>
            <person name="Watanabe Y."/>
            <person name="Takaesu G."/>
            <person name="Hagiwara M."/>
            <person name="Irie K."/>
            <person name="Matsumoto K."/>
        </authorList>
    </citation>
    <scope>FUNCTION</scope>
    <scope>PHOSPHORYLATION</scope>
    <scope>INTERACTION WITH KDX1 AND SLT2</scope>
</reference>
<reference key="6">
    <citation type="journal article" date="2003" name="Nature">
        <title>Global analysis of protein expression in yeast.</title>
        <authorList>
            <person name="Ghaemmaghami S."/>
            <person name="Huh W.-K."/>
            <person name="Bower K."/>
            <person name="Howson R.W."/>
            <person name="Belle A."/>
            <person name="Dephoure N."/>
            <person name="O'Shea E.K."/>
            <person name="Weissman J.S."/>
        </authorList>
    </citation>
    <scope>LEVEL OF PROTEIN EXPRESSION [LARGE SCALE ANALYSIS]</scope>
</reference>
<reference key="7">
    <citation type="journal article" date="2007" name="J. Proteome Res.">
        <title>Large-scale phosphorylation analysis of alpha-factor-arrested Saccharomyces cerevisiae.</title>
        <authorList>
            <person name="Li X."/>
            <person name="Gerber S.A."/>
            <person name="Rudner A.D."/>
            <person name="Beausoleil S.A."/>
            <person name="Haas W."/>
            <person name="Villen J."/>
            <person name="Elias J.E."/>
            <person name="Gygi S.P."/>
        </authorList>
    </citation>
    <scope>PHOSPHORYLATION [LARGE SCALE ANALYSIS] AT SER-164; SER-374 AND SER-377</scope>
    <scope>IDENTIFICATION BY MASS SPECTROMETRY [LARGE SCALE ANALYSIS]</scope>
    <source>
        <strain>ADR376</strain>
    </source>
</reference>
<reference key="8">
    <citation type="journal article" date="2008" name="Mol. Cell. Proteomics">
        <title>A multidimensional chromatography technology for in-depth phosphoproteome analysis.</title>
        <authorList>
            <person name="Albuquerque C.P."/>
            <person name="Smolka M.B."/>
            <person name="Payne S.H."/>
            <person name="Bafna V."/>
            <person name="Eng J."/>
            <person name="Zhou H."/>
        </authorList>
    </citation>
    <scope>PHOSPHORYLATION [LARGE SCALE ANALYSIS] AT SER-374</scope>
    <scope>IDENTIFICATION BY MASS SPECTROMETRY [LARGE SCALE ANALYSIS]</scope>
</reference>
<reference key="9">
    <citation type="journal article" date="2009" name="Science">
        <title>Global analysis of Cdk1 substrate phosphorylation sites provides insights into evolution.</title>
        <authorList>
            <person name="Holt L.J."/>
            <person name="Tuch B.B."/>
            <person name="Villen J."/>
            <person name="Johnson A.D."/>
            <person name="Gygi S.P."/>
            <person name="Morgan D.O."/>
        </authorList>
    </citation>
    <scope>PHOSPHORYLATION [LARGE SCALE ANALYSIS] AT SER-120; SER-374 AND SER-377</scope>
    <scope>IDENTIFICATION BY MASS SPECTROMETRY [LARGE SCALE ANALYSIS]</scope>
</reference>
<gene>
    <name type="primary">RLM1</name>
    <name type="ordered locus">YPL089C</name>
    <name type="ORF">LPG19C</name>
</gene>
<proteinExistence type="evidence at protein level"/>